<evidence type="ECO:0000255" key="1">
    <source>
        <dbReference type="HAMAP-Rule" id="MF_00102"/>
    </source>
</evidence>
<evidence type="ECO:0000305" key="2"/>
<feature type="chain" id="PRO_0000228329" description="4-hydroxy-tetrahydrodipicolinate reductase">
    <location>
        <begin position="1"/>
        <end position="282"/>
    </location>
</feature>
<feature type="active site" description="Proton donor/acceptor" evidence="1">
    <location>
        <position position="164"/>
    </location>
</feature>
<feature type="active site" description="Proton donor" evidence="1">
    <location>
        <position position="168"/>
    </location>
</feature>
<feature type="binding site" evidence="1">
    <location>
        <begin position="12"/>
        <end position="17"/>
    </location>
    <ligand>
        <name>NAD(+)</name>
        <dbReference type="ChEBI" id="CHEBI:57540"/>
    </ligand>
</feature>
<feature type="binding site" evidence="1">
    <location>
        <position position="44"/>
    </location>
    <ligand>
        <name>NADP(+)</name>
        <dbReference type="ChEBI" id="CHEBI:58349"/>
    </ligand>
</feature>
<feature type="binding site" evidence="1">
    <location>
        <begin position="107"/>
        <end position="109"/>
    </location>
    <ligand>
        <name>NAD(+)</name>
        <dbReference type="ChEBI" id="CHEBI:57540"/>
    </ligand>
</feature>
<feature type="binding site" evidence="1">
    <location>
        <begin position="131"/>
        <end position="134"/>
    </location>
    <ligand>
        <name>NAD(+)</name>
        <dbReference type="ChEBI" id="CHEBI:57540"/>
    </ligand>
</feature>
<feature type="binding site" evidence="1">
    <location>
        <position position="165"/>
    </location>
    <ligand>
        <name>(S)-2,3,4,5-tetrahydrodipicolinate</name>
        <dbReference type="ChEBI" id="CHEBI:16845"/>
    </ligand>
</feature>
<feature type="binding site" evidence="1">
    <location>
        <begin position="174"/>
        <end position="175"/>
    </location>
    <ligand>
        <name>(S)-2,3,4,5-tetrahydrodipicolinate</name>
        <dbReference type="ChEBI" id="CHEBI:16845"/>
    </ligand>
</feature>
<protein>
    <recommendedName>
        <fullName evidence="1">4-hydroxy-tetrahydrodipicolinate reductase</fullName>
        <shortName evidence="1">HTPA reductase</shortName>
        <ecNumber evidence="1">1.17.1.8</ecNumber>
    </recommendedName>
</protein>
<comment type="function">
    <text evidence="1">Catalyzes the conversion of 4-hydroxy-tetrahydrodipicolinate (HTPA) to tetrahydrodipicolinate.</text>
</comment>
<comment type="catalytic activity">
    <reaction evidence="1">
        <text>(S)-2,3,4,5-tetrahydrodipicolinate + NAD(+) + H2O = (2S,4S)-4-hydroxy-2,3,4,5-tetrahydrodipicolinate + NADH + H(+)</text>
        <dbReference type="Rhea" id="RHEA:35323"/>
        <dbReference type="ChEBI" id="CHEBI:15377"/>
        <dbReference type="ChEBI" id="CHEBI:15378"/>
        <dbReference type="ChEBI" id="CHEBI:16845"/>
        <dbReference type="ChEBI" id="CHEBI:57540"/>
        <dbReference type="ChEBI" id="CHEBI:57945"/>
        <dbReference type="ChEBI" id="CHEBI:67139"/>
        <dbReference type="EC" id="1.17.1.8"/>
    </reaction>
</comment>
<comment type="catalytic activity">
    <reaction evidence="1">
        <text>(S)-2,3,4,5-tetrahydrodipicolinate + NADP(+) + H2O = (2S,4S)-4-hydroxy-2,3,4,5-tetrahydrodipicolinate + NADPH + H(+)</text>
        <dbReference type="Rhea" id="RHEA:35331"/>
        <dbReference type="ChEBI" id="CHEBI:15377"/>
        <dbReference type="ChEBI" id="CHEBI:15378"/>
        <dbReference type="ChEBI" id="CHEBI:16845"/>
        <dbReference type="ChEBI" id="CHEBI:57783"/>
        <dbReference type="ChEBI" id="CHEBI:58349"/>
        <dbReference type="ChEBI" id="CHEBI:67139"/>
        <dbReference type="EC" id="1.17.1.8"/>
    </reaction>
</comment>
<comment type="pathway">
    <text evidence="1">Amino-acid biosynthesis; L-lysine biosynthesis via DAP pathway; (S)-tetrahydrodipicolinate from L-aspartate: step 4/4.</text>
</comment>
<comment type="subunit">
    <text evidence="1">Homotetramer.</text>
</comment>
<comment type="subcellular location">
    <subcellularLocation>
        <location evidence="1">Cytoplasm</location>
    </subcellularLocation>
</comment>
<comment type="similarity">
    <text evidence="1">Belongs to the DapB family.</text>
</comment>
<comment type="caution">
    <text evidence="2">Was originally thought to be a dihydrodipicolinate reductase (DHDPR), catalyzing the conversion of dihydrodipicolinate to tetrahydrodipicolinate. However, it was shown in E.coli that the substrate of the enzymatic reaction is not dihydrodipicolinate (DHDP) but in fact (2S,4S)-4-hydroxy-2,3,4,5-tetrahydrodipicolinic acid (HTPA), the product released by the DapA-catalyzed reaction.</text>
</comment>
<proteinExistence type="inferred from homology"/>
<name>DAPB_BLOPB</name>
<keyword id="KW-0028">Amino-acid biosynthesis</keyword>
<keyword id="KW-0963">Cytoplasm</keyword>
<keyword id="KW-0220">Diaminopimelate biosynthesis</keyword>
<keyword id="KW-0457">Lysine biosynthesis</keyword>
<keyword id="KW-0520">NAD</keyword>
<keyword id="KW-0521">NADP</keyword>
<keyword id="KW-0560">Oxidoreductase</keyword>
<keyword id="KW-1185">Reference proteome</keyword>
<accession>Q493S0</accession>
<reference key="1">
    <citation type="journal article" date="2005" name="Genome Res.">
        <title>Genome sequence of Blochmannia pennsylvanicus indicates parallel evolutionary trends among bacterial mutualists of insects.</title>
        <authorList>
            <person name="Degnan P.H."/>
            <person name="Lazarus A.B."/>
            <person name="Wernegreen J.J."/>
        </authorList>
    </citation>
    <scope>NUCLEOTIDE SEQUENCE [LARGE SCALE GENOMIC DNA]</scope>
    <source>
        <strain>BPEN</strain>
    </source>
</reference>
<dbReference type="EC" id="1.17.1.8" evidence="1"/>
<dbReference type="EMBL" id="CP000016">
    <property type="protein sequence ID" value="AAZ40765.1"/>
    <property type="molecule type" value="Genomic_DNA"/>
</dbReference>
<dbReference type="RefSeq" id="WP_011282672.1">
    <property type="nucleotide sequence ID" value="NC_007292.1"/>
</dbReference>
<dbReference type="SMR" id="Q493S0"/>
<dbReference type="STRING" id="291272.BPEN_125"/>
<dbReference type="KEGG" id="bpn:BPEN_125"/>
<dbReference type="eggNOG" id="COG0289">
    <property type="taxonomic scope" value="Bacteria"/>
</dbReference>
<dbReference type="HOGENOM" id="CLU_047479_2_1_6"/>
<dbReference type="OrthoDB" id="9790352at2"/>
<dbReference type="UniPathway" id="UPA00034">
    <property type="reaction ID" value="UER00018"/>
</dbReference>
<dbReference type="Proteomes" id="UP000007794">
    <property type="component" value="Chromosome"/>
</dbReference>
<dbReference type="GO" id="GO:0005829">
    <property type="term" value="C:cytosol"/>
    <property type="evidence" value="ECO:0007669"/>
    <property type="project" value="TreeGrafter"/>
</dbReference>
<dbReference type="GO" id="GO:0008839">
    <property type="term" value="F:4-hydroxy-tetrahydrodipicolinate reductase"/>
    <property type="evidence" value="ECO:0007669"/>
    <property type="project" value="UniProtKB-EC"/>
</dbReference>
<dbReference type="GO" id="GO:0051287">
    <property type="term" value="F:NAD binding"/>
    <property type="evidence" value="ECO:0007669"/>
    <property type="project" value="UniProtKB-UniRule"/>
</dbReference>
<dbReference type="GO" id="GO:0050661">
    <property type="term" value="F:NADP binding"/>
    <property type="evidence" value="ECO:0007669"/>
    <property type="project" value="UniProtKB-UniRule"/>
</dbReference>
<dbReference type="GO" id="GO:0016726">
    <property type="term" value="F:oxidoreductase activity, acting on CH or CH2 groups, NAD or NADP as acceptor"/>
    <property type="evidence" value="ECO:0007669"/>
    <property type="project" value="UniProtKB-UniRule"/>
</dbReference>
<dbReference type="GO" id="GO:0019877">
    <property type="term" value="P:diaminopimelate biosynthetic process"/>
    <property type="evidence" value="ECO:0007669"/>
    <property type="project" value="UniProtKB-UniRule"/>
</dbReference>
<dbReference type="GO" id="GO:0009089">
    <property type="term" value="P:lysine biosynthetic process via diaminopimelate"/>
    <property type="evidence" value="ECO:0007669"/>
    <property type="project" value="UniProtKB-UniRule"/>
</dbReference>
<dbReference type="CDD" id="cd02274">
    <property type="entry name" value="DHDPR_N"/>
    <property type="match status" value="1"/>
</dbReference>
<dbReference type="FunFam" id="3.30.360.10:FF:000009">
    <property type="entry name" value="4-hydroxy-tetrahydrodipicolinate reductase"/>
    <property type="match status" value="1"/>
</dbReference>
<dbReference type="Gene3D" id="3.30.360.10">
    <property type="entry name" value="Dihydrodipicolinate Reductase, domain 2"/>
    <property type="match status" value="1"/>
</dbReference>
<dbReference type="Gene3D" id="3.40.50.720">
    <property type="entry name" value="NAD(P)-binding Rossmann-like Domain"/>
    <property type="match status" value="1"/>
</dbReference>
<dbReference type="HAMAP" id="MF_00102">
    <property type="entry name" value="DapB"/>
    <property type="match status" value="1"/>
</dbReference>
<dbReference type="InterPro" id="IPR022663">
    <property type="entry name" value="DapB_C"/>
</dbReference>
<dbReference type="InterPro" id="IPR000846">
    <property type="entry name" value="DapB_N"/>
</dbReference>
<dbReference type="InterPro" id="IPR023940">
    <property type="entry name" value="DHDPR_bac"/>
</dbReference>
<dbReference type="InterPro" id="IPR036291">
    <property type="entry name" value="NAD(P)-bd_dom_sf"/>
</dbReference>
<dbReference type="NCBIfam" id="TIGR00036">
    <property type="entry name" value="dapB"/>
    <property type="match status" value="1"/>
</dbReference>
<dbReference type="PANTHER" id="PTHR20836:SF0">
    <property type="entry name" value="4-HYDROXY-TETRAHYDRODIPICOLINATE REDUCTASE 1, CHLOROPLASTIC-RELATED"/>
    <property type="match status" value="1"/>
</dbReference>
<dbReference type="PANTHER" id="PTHR20836">
    <property type="entry name" value="DIHYDRODIPICOLINATE REDUCTASE"/>
    <property type="match status" value="1"/>
</dbReference>
<dbReference type="Pfam" id="PF05173">
    <property type="entry name" value="DapB_C"/>
    <property type="match status" value="1"/>
</dbReference>
<dbReference type="Pfam" id="PF01113">
    <property type="entry name" value="DapB_N"/>
    <property type="match status" value="1"/>
</dbReference>
<dbReference type="PIRSF" id="PIRSF000161">
    <property type="entry name" value="DHPR"/>
    <property type="match status" value="1"/>
</dbReference>
<dbReference type="SUPFAM" id="SSF55347">
    <property type="entry name" value="Glyceraldehyde-3-phosphate dehydrogenase-like, C-terminal domain"/>
    <property type="match status" value="1"/>
</dbReference>
<dbReference type="SUPFAM" id="SSF51735">
    <property type="entry name" value="NAD(P)-binding Rossmann-fold domains"/>
    <property type="match status" value="1"/>
</dbReference>
<sequence length="282" mass="30864">MSDTPLRIAVTGVTGRMGKEIVTCIVKEEKQFSQEIVLGAAITRLNTNICGMDAGILINTDALGIEITDNLESIKDNFDVLVDFTAPDISIEYLKFCVNNNKNIVIGTTGFNQIHKNIILNASHKIGIVFSSNFSIGVALISKLLHKITQVIGNTSDISIIETHHNRKRDIPSGTSLTMQNIIVNALRSIHSNRIIDSNLDSTTYSPASSYKDILIHSIRAGDVVGEHTVLFAGPGERLEITHKASDRLIFAHGALRAAFWVGRDKIGLFDISDILEMDTLL</sequence>
<gene>
    <name evidence="1" type="primary">dapB</name>
    <name type="ordered locus">BPEN_125</name>
</gene>
<organism>
    <name type="scientific">Blochmanniella pennsylvanica (strain BPEN)</name>
    <dbReference type="NCBI Taxonomy" id="291272"/>
    <lineage>
        <taxon>Bacteria</taxon>
        <taxon>Pseudomonadati</taxon>
        <taxon>Pseudomonadota</taxon>
        <taxon>Gammaproteobacteria</taxon>
        <taxon>Enterobacterales</taxon>
        <taxon>Enterobacteriaceae</taxon>
        <taxon>ant endosymbionts</taxon>
        <taxon>Candidatus Blochmanniella</taxon>
    </lineage>
</organism>